<dbReference type="EC" id="2.4.2.29" evidence="1"/>
<dbReference type="EMBL" id="CP000931">
    <property type="protein sequence ID" value="ABZ76120.1"/>
    <property type="molecule type" value="Genomic_DNA"/>
</dbReference>
<dbReference type="RefSeq" id="WP_012276660.1">
    <property type="nucleotide sequence ID" value="NC_010334.1"/>
</dbReference>
<dbReference type="SMR" id="B0TND4"/>
<dbReference type="STRING" id="458817.Shal_1554"/>
<dbReference type="KEGG" id="shl:Shal_1554"/>
<dbReference type="eggNOG" id="COG0343">
    <property type="taxonomic scope" value="Bacteria"/>
</dbReference>
<dbReference type="HOGENOM" id="CLU_022060_0_1_6"/>
<dbReference type="OrthoDB" id="9805417at2"/>
<dbReference type="UniPathway" id="UPA00392"/>
<dbReference type="Proteomes" id="UP000001317">
    <property type="component" value="Chromosome"/>
</dbReference>
<dbReference type="GO" id="GO:0005829">
    <property type="term" value="C:cytosol"/>
    <property type="evidence" value="ECO:0007669"/>
    <property type="project" value="TreeGrafter"/>
</dbReference>
<dbReference type="GO" id="GO:0046872">
    <property type="term" value="F:metal ion binding"/>
    <property type="evidence" value="ECO:0007669"/>
    <property type="project" value="UniProtKB-KW"/>
</dbReference>
<dbReference type="GO" id="GO:0008479">
    <property type="term" value="F:tRNA-guanosine(34) queuine transglycosylase activity"/>
    <property type="evidence" value="ECO:0007669"/>
    <property type="project" value="UniProtKB-UniRule"/>
</dbReference>
<dbReference type="GO" id="GO:0008616">
    <property type="term" value="P:queuosine biosynthetic process"/>
    <property type="evidence" value="ECO:0007669"/>
    <property type="project" value="UniProtKB-UniRule"/>
</dbReference>
<dbReference type="GO" id="GO:0002099">
    <property type="term" value="P:tRNA wobble guanine modification"/>
    <property type="evidence" value="ECO:0007669"/>
    <property type="project" value="TreeGrafter"/>
</dbReference>
<dbReference type="GO" id="GO:0101030">
    <property type="term" value="P:tRNA-guanine transglycosylation"/>
    <property type="evidence" value="ECO:0007669"/>
    <property type="project" value="InterPro"/>
</dbReference>
<dbReference type="FunFam" id="3.20.20.105:FF:000001">
    <property type="entry name" value="Queuine tRNA-ribosyltransferase"/>
    <property type="match status" value="1"/>
</dbReference>
<dbReference type="Gene3D" id="3.20.20.105">
    <property type="entry name" value="Queuine tRNA-ribosyltransferase-like"/>
    <property type="match status" value="1"/>
</dbReference>
<dbReference type="HAMAP" id="MF_00168">
    <property type="entry name" value="Q_tRNA_Tgt"/>
    <property type="match status" value="1"/>
</dbReference>
<dbReference type="InterPro" id="IPR050076">
    <property type="entry name" value="ArchSynthase1/Queuine_TRR"/>
</dbReference>
<dbReference type="InterPro" id="IPR004803">
    <property type="entry name" value="TGT"/>
</dbReference>
<dbReference type="InterPro" id="IPR036511">
    <property type="entry name" value="TGT-like_sf"/>
</dbReference>
<dbReference type="InterPro" id="IPR002616">
    <property type="entry name" value="tRNA_ribo_trans-like"/>
</dbReference>
<dbReference type="NCBIfam" id="TIGR00430">
    <property type="entry name" value="Q_tRNA_tgt"/>
    <property type="match status" value="1"/>
</dbReference>
<dbReference type="NCBIfam" id="TIGR00449">
    <property type="entry name" value="tgt_general"/>
    <property type="match status" value="1"/>
</dbReference>
<dbReference type="PANTHER" id="PTHR46499">
    <property type="entry name" value="QUEUINE TRNA-RIBOSYLTRANSFERASE"/>
    <property type="match status" value="1"/>
</dbReference>
<dbReference type="PANTHER" id="PTHR46499:SF1">
    <property type="entry name" value="QUEUINE TRNA-RIBOSYLTRANSFERASE"/>
    <property type="match status" value="1"/>
</dbReference>
<dbReference type="Pfam" id="PF01702">
    <property type="entry name" value="TGT"/>
    <property type="match status" value="1"/>
</dbReference>
<dbReference type="SUPFAM" id="SSF51713">
    <property type="entry name" value="tRNA-guanine transglycosylase"/>
    <property type="match status" value="1"/>
</dbReference>
<reference key="1">
    <citation type="submission" date="2008-01" db="EMBL/GenBank/DDBJ databases">
        <title>Complete sequence of Shewanella halifaxensis HAW-EB4.</title>
        <authorList>
            <consortium name="US DOE Joint Genome Institute"/>
            <person name="Copeland A."/>
            <person name="Lucas S."/>
            <person name="Lapidus A."/>
            <person name="Glavina del Rio T."/>
            <person name="Dalin E."/>
            <person name="Tice H."/>
            <person name="Bruce D."/>
            <person name="Goodwin L."/>
            <person name="Pitluck S."/>
            <person name="Sims D."/>
            <person name="Brettin T."/>
            <person name="Detter J.C."/>
            <person name="Han C."/>
            <person name="Kuske C.R."/>
            <person name="Schmutz J."/>
            <person name="Larimer F."/>
            <person name="Land M."/>
            <person name="Hauser L."/>
            <person name="Kyrpides N."/>
            <person name="Kim E."/>
            <person name="Zhao J.-S."/>
            <person name="Richardson P."/>
        </authorList>
    </citation>
    <scope>NUCLEOTIDE SEQUENCE [LARGE SCALE GENOMIC DNA]</scope>
    <source>
        <strain>HAW-EB4</strain>
    </source>
</reference>
<proteinExistence type="inferred from homology"/>
<keyword id="KW-0328">Glycosyltransferase</keyword>
<keyword id="KW-0479">Metal-binding</keyword>
<keyword id="KW-0671">Queuosine biosynthesis</keyword>
<keyword id="KW-0808">Transferase</keyword>
<keyword id="KW-0819">tRNA processing</keyword>
<keyword id="KW-0862">Zinc</keyword>
<feature type="chain" id="PRO_1000077018" description="Queuine tRNA-ribosyltransferase">
    <location>
        <begin position="1"/>
        <end position="377"/>
    </location>
</feature>
<feature type="region of interest" description="RNA binding" evidence="1">
    <location>
        <begin position="245"/>
        <end position="251"/>
    </location>
</feature>
<feature type="region of interest" description="RNA binding; important for wobble base 34 recognition" evidence="1">
    <location>
        <begin position="269"/>
        <end position="273"/>
    </location>
</feature>
<feature type="active site" description="Proton acceptor" evidence="1">
    <location>
        <position position="89"/>
    </location>
</feature>
<feature type="active site" description="Nucleophile" evidence="1">
    <location>
        <position position="264"/>
    </location>
</feature>
<feature type="binding site" evidence="1">
    <location>
        <begin position="89"/>
        <end position="93"/>
    </location>
    <ligand>
        <name>substrate</name>
    </ligand>
</feature>
<feature type="binding site" evidence="1">
    <location>
        <position position="143"/>
    </location>
    <ligand>
        <name>substrate</name>
    </ligand>
</feature>
<feature type="binding site" evidence="1">
    <location>
        <position position="187"/>
    </location>
    <ligand>
        <name>substrate</name>
    </ligand>
</feature>
<feature type="binding site" evidence="1">
    <location>
        <position position="214"/>
    </location>
    <ligand>
        <name>substrate</name>
    </ligand>
</feature>
<feature type="binding site" evidence="1">
    <location>
        <position position="302"/>
    </location>
    <ligand>
        <name>Zn(2+)</name>
        <dbReference type="ChEBI" id="CHEBI:29105"/>
    </ligand>
</feature>
<feature type="binding site" evidence="1">
    <location>
        <position position="304"/>
    </location>
    <ligand>
        <name>Zn(2+)</name>
        <dbReference type="ChEBI" id="CHEBI:29105"/>
    </ligand>
</feature>
<feature type="binding site" evidence="1">
    <location>
        <position position="307"/>
    </location>
    <ligand>
        <name>Zn(2+)</name>
        <dbReference type="ChEBI" id="CHEBI:29105"/>
    </ligand>
</feature>
<feature type="binding site" evidence="1">
    <location>
        <position position="333"/>
    </location>
    <ligand>
        <name>Zn(2+)</name>
        <dbReference type="ChEBI" id="CHEBI:29105"/>
    </ligand>
</feature>
<gene>
    <name evidence="1" type="primary">tgt</name>
    <name type="ordered locus">Shal_1554</name>
</gene>
<protein>
    <recommendedName>
        <fullName evidence="1">Queuine tRNA-ribosyltransferase</fullName>
        <ecNumber evidence="1">2.4.2.29</ecNumber>
    </recommendedName>
    <alternativeName>
        <fullName evidence="1">Guanine insertion enzyme</fullName>
    </alternativeName>
    <alternativeName>
        <fullName evidence="1">tRNA-guanine transglycosylase</fullName>
    </alternativeName>
</protein>
<accession>B0TND4</accession>
<sequence length="377" mass="42869">MKFELDTTQGRARRGRLIFERGTVETPAFMPVGTYGTVKGMTPEEVRATGADILLGNTFHLWLRPGEEIMRKHGDLHDFMNWQRPILTDSGGFQVFSLGDIRKITEEGVHFRSPINGEKIFLDPEKSMQIQDSLGSDVVMIFDECTPYPATEDEARKSMQMSLRWAQRSRDEFDRLENPNSLFGIIQGGVYEDLRDESLNGLVDIGFDGYAVGGLAVGEPKEDMHRILEHVCPKIPADKPRYLMGVGKPEDLVEGVRRGVDMFDCVMPTRNARNGHLFTSEGVIKIRNARHRDDTSPLDDKCDCYTCKNYSRAYLYHLDRCNEILGARLNTIHNLRYYQRLMEGLRGAIETGTLDAFVTEFYTSQGREVPEVPELTD</sequence>
<name>TGT_SHEHH</name>
<organism>
    <name type="scientific">Shewanella halifaxensis (strain HAW-EB4)</name>
    <dbReference type="NCBI Taxonomy" id="458817"/>
    <lineage>
        <taxon>Bacteria</taxon>
        <taxon>Pseudomonadati</taxon>
        <taxon>Pseudomonadota</taxon>
        <taxon>Gammaproteobacteria</taxon>
        <taxon>Alteromonadales</taxon>
        <taxon>Shewanellaceae</taxon>
        <taxon>Shewanella</taxon>
    </lineage>
</organism>
<evidence type="ECO:0000255" key="1">
    <source>
        <dbReference type="HAMAP-Rule" id="MF_00168"/>
    </source>
</evidence>
<comment type="function">
    <text evidence="1">Catalyzes the base-exchange of a guanine (G) residue with the queuine precursor 7-aminomethyl-7-deazaguanine (PreQ1) at position 34 (anticodon wobble position) in tRNAs with GU(N) anticodons (tRNA-Asp, -Asn, -His and -Tyr). Catalysis occurs through a double-displacement mechanism. The nucleophile active site attacks the C1' of nucleotide 34 to detach the guanine base from the RNA, forming a covalent enzyme-RNA intermediate. The proton acceptor active site deprotonates the incoming PreQ1, allowing a nucleophilic attack on the C1' of the ribose to form the product. After dissociation, two additional enzymatic reactions on the tRNA convert PreQ1 to queuine (Q), resulting in the hypermodified nucleoside queuosine (7-(((4,5-cis-dihydroxy-2-cyclopenten-1-yl)amino)methyl)-7-deazaguanosine).</text>
</comment>
<comment type="catalytic activity">
    <reaction evidence="1">
        <text>7-aminomethyl-7-carbaguanine + guanosine(34) in tRNA = 7-aminomethyl-7-carbaguanosine(34) in tRNA + guanine</text>
        <dbReference type="Rhea" id="RHEA:24104"/>
        <dbReference type="Rhea" id="RHEA-COMP:10341"/>
        <dbReference type="Rhea" id="RHEA-COMP:10342"/>
        <dbReference type="ChEBI" id="CHEBI:16235"/>
        <dbReference type="ChEBI" id="CHEBI:58703"/>
        <dbReference type="ChEBI" id="CHEBI:74269"/>
        <dbReference type="ChEBI" id="CHEBI:82833"/>
        <dbReference type="EC" id="2.4.2.29"/>
    </reaction>
</comment>
<comment type="cofactor">
    <cofactor evidence="1">
        <name>Zn(2+)</name>
        <dbReference type="ChEBI" id="CHEBI:29105"/>
    </cofactor>
    <text evidence="1">Binds 1 zinc ion per subunit.</text>
</comment>
<comment type="pathway">
    <text evidence="1">tRNA modification; tRNA-queuosine biosynthesis.</text>
</comment>
<comment type="subunit">
    <text evidence="1">Homodimer. Within each dimer, one monomer is responsible for RNA recognition and catalysis, while the other monomer binds to the replacement base PreQ1.</text>
</comment>
<comment type="similarity">
    <text evidence="1">Belongs to the queuine tRNA-ribosyltransferase family.</text>
</comment>